<accession>Q0BD80</accession>
<reference key="1">
    <citation type="submission" date="2006-08" db="EMBL/GenBank/DDBJ databases">
        <title>Complete sequence of chromosome 1 of Burkholderia cepacia AMMD.</title>
        <authorList>
            <person name="Copeland A."/>
            <person name="Lucas S."/>
            <person name="Lapidus A."/>
            <person name="Barry K."/>
            <person name="Detter J.C."/>
            <person name="Glavina del Rio T."/>
            <person name="Hammon N."/>
            <person name="Israni S."/>
            <person name="Pitluck S."/>
            <person name="Bruce D."/>
            <person name="Chain P."/>
            <person name="Malfatti S."/>
            <person name="Shin M."/>
            <person name="Vergez L."/>
            <person name="Schmutz J."/>
            <person name="Larimer F."/>
            <person name="Land M."/>
            <person name="Hauser L."/>
            <person name="Kyrpides N."/>
            <person name="Kim E."/>
            <person name="Parke J."/>
            <person name="Coenye T."/>
            <person name="Konstantinidis K."/>
            <person name="Ramette A."/>
            <person name="Tiedje J."/>
            <person name="Richardson P."/>
        </authorList>
    </citation>
    <scope>NUCLEOTIDE SEQUENCE [LARGE SCALE GENOMIC DNA]</scope>
    <source>
        <strain>ATCC BAA-244 / DSM 16087 / CCUG 44356 / LMG 19182 / AMMD</strain>
    </source>
</reference>
<feature type="chain" id="PRO_1000061763" description="Ribosomal RNA large subunit methyltransferase H">
    <location>
        <begin position="1"/>
        <end position="156"/>
    </location>
</feature>
<feature type="binding site" evidence="1">
    <location>
        <position position="73"/>
    </location>
    <ligand>
        <name>S-adenosyl-L-methionine</name>
        <dbReference type="ChEBI" id="CHEBI:59789"/>
    </ligand>
</feature>
<feature type="binding site" evidence="1">
    <location>
        <position position="104"/>
    </location>
    <ligand>
        <name>S-adenosyl-L-methionine</name>
        <dbReference type="ChEBI" id="CHEBI:59789"/>
    </ligand>
</feature>
<feature type="binding site" evidence="1">
    <location>
        <begin position="123"/>
        <end position="128"/>
    </location>
    <ligand>
        <name>S-adenosyl-L-methionine</name>
        <dbReference type="ChEBI" id="CHEBI:59789"/>
    </ligand>
</feature>
<keyword id="KW-0963">Cytoplasm</keyword>
<keyword id="KW-0489">Methyltransferase</keyword>
<keyword id="KW-0698">rRNA processing</keyword>
<keyword id="KW-0949">S-adenosyl-L-methionine</keyword>
<keyword id="KW-0808">Transferase</keyword>
<comment type="function">
    <text evidence="1">Specifically methylates the pseudouridine at position 1915 (m3Psi1915) in 23S rRNA.</text>
</comment>
<comment type="catalytic activity">
    <reaction evidence="1">
        <text>pseudouridine(1915) in 23S rRNA + S-adenosyl-L-methionine = N(3)-methylpseudouridine(1915) in 23S rRNA + S-adenosyl-L-homocysteine + H(+)</text>
        <dbReference type="Rhea" id="RHEA:42752"/>
        <dbReference type="Rhea" id="RHEA-COMP:10221"/>
        <dbReference type="Rhea" id="RHEA-COMP:10222"/>
        <dbReference type="ChEBI" id="CHEBI:15378"/>
        <dbReference type="ChEBI" id="CHEBI:57856"/>
        <dbReference type="ChEBI" id="CHEBI:59789"/>
        <dbReference type="ChEBI" id="CHEBI:65314"/>
        <dbReference type="ChEBI" id="CHEBI:74486"/>
        <dbReference type="EC" id="2.1.1.177"/>
    </reaction>
</comment>
<comment type="subunit">
    <text evidence="1">Homodimer.</text>
</comment>
<comment type="subcellular location">
    <subcellularLocation>
        <location evidence="1">Cytoplasm</location>
    </subcellularLocation>
</comment>
<comment type="similarity">
    <text evidence="1">Belongs to the RNA methyltransferase RlmH family.</text>
</comment>
<protein>
    <recommendedName>
        <fullName evidence="1">Ribosomal RNA large subunit methyltransferase H</fullName>
        <ecNumber evidence="1">2.1.1.177</ecNumber>
    </recommendedName>
    <alternativeName>
        <fullName evidence="1">23S rRNA (pseudouridine1915-N3)-methyltransferase</fullName>
    </alternativeName>
    <alternativeName>
        <fullName evidence="1">23S rRNA m3Psi1915 methyltransferase</fullName>
    </alternativeName>
    <alternativeName>
        <fullName evidence="1">rRNA (pseudouridine-N3-)-methyltransferase RlmH</fullName>
    </alternativeName>
</protein>
<name>RLMH_BURCM</name>
<evidence type="ECO:0000255" key="1">
    <source>
        <dbReference type="HAMAP-Rule" id="MF_00658"/>
    </source>
</evidence>
<organism>
    <name type="scientific">Burkholderia ambifaria (strain ATCC BAA-244 / DSM 16087 / CCUG 44356 / LMG 19182 / AMMD)</name>
    <name type="common">Burkholderia cepacia (strain AMMD)</name>
    <dbReference type="NCBI Taxonomy" id="339670"/>
    <lineage>
        <taxon>Bacteria</taxon>
        <taxon>Pseudomonadati</taxon>
        <taxon>Pseudomonadota</taxon>
        <taxon>Betaproteobacteria</taxon>
        <taxon>Burkholderiales</taxon>
        <taxon>Burkholderiaceae</taxon>
        <taxon>Burkholderia</taxon>
        <taxon>Burkholderia cepacia complex</taxon>
    </lineage>
</organism>
<proteinExistence type="inferred from homology"/>
<gene>
    <name evidence="1" type="primary">rlmH</name>
    <name type="ordered locus">Bamb_2337</name>
</gene>
<sequence length="156" mass="17484">MKLFILAVGHKMPGWIASGFDEYTKRMPPELRIELREIKPELRSGGRSADSVMAAERQKIEAALPKGARIVALDERGRDWTTMQLAQALPGWQQDGRDVAFVIGGADGLDPELKARADVLLRISSMTLPHGMVRVLLAEQLYRAWSITQNHPYHRA</sequence>
<dbReference type="EC" id="2.1.1.177" evidence="1"/>
<dbReference type="EMBL" id="CP000440">
    <property type="protein sequence ID" value="ABI87893.1"/>
    <property type="molecule type" value="Genomic_DNA"/>
</dbReference>
<dbReference type="RefSeq" id="WP_011657522.1">
    <property type="nucleotide sequence ID" value="NZ_CP009798.1"/>
</dbReference>
<dbReference type="SMR" id="Q0BD80"/>
<dbReference type="GeneID" id="93085455"/>
<dbReference type="KEGG" id="bam:Bamb_2337"/>
<dbReference type="PATRIC" id="fig|339670.21.peg.2589"/>
<dbReference type="eggNOG" id="COG1576">
    <property type="taxonomic scope" value="Bacteria"/>
</dbReference>
<dbReference type="Proteomes" id="UP000000662">
    <property type="component" value="Chromosome 1"/>
</dbReference>
<dbReference type="GO" id="GO:0005737">
    <property type="term" value="C:cytoplasm"/>
    <property type="evidence" value="ECO:0007669"/>
    <property type="project" value="UniProtKB-SubCell"/>
</dbReference>
<dbReference type="GO" id="GO:0070038">
    <property type="term" value="F:rRNA (pseudouridine-N3-)-methyltransferase activity"/>
    <property type="evidence" value="ECO:0007669"/>
    <property type="project" value="UniProtKB-UniRule"/>
</dbReference>
<dbReference type="CDD" id="cd18081">
    <property type="entry name" value="RlmH-like"/>
    <property type="match status" value="1"/>
</dbReference>
<dbReference type="Gene3D" id="3.40.1280.10">
    <property type="match status" value="1"/>
</dbReference>
<dbReference type="HAMAP" id="MF_00658">
    <property type="entry name" value="23SrRNA_methyltr_H"/>
    <property type="match status" value="1"/>
</dbReference>
<dbReference type="InterPro" id="IPR029028">
    <property type="entry name" value="Alpha/beta_knot_MTases"/>
</dbReference>
<dbReference type="InterPro" id="IPR003742">
    <property type="entry name" value="RlmH-like"/>
</dbReference>
<dbReference type="InterPro" id="IPR029026">
    <property type="entry name" value="tRNA_m1G_MTases_N"/>
</dbReference>
<dbReference type="NCBIfam" id="NF000986">
    <property type="entry name" value="PRK00103.1-4"/>
    <property type="match status" value="1"/>
</dbReference>
<dbReference type="NCBIfam" id="TIGR00246">
    <property type="entry name" value="tRNA_RlmH_YbeA"/>
    <property type="match status" value="1"/>
</dbReference>
<dbReference type="PANTHER" id="PTHR33603">
    <property type="entry name" value="METHYLTRANSFERASE"/>
    <property type="match status" value="1"/>
</dbReference>
<dbReference type="PANTHER" id="PTHR33603:SF1">
    <property type="entry name" value="RIBOSOMAL RNA LARGE SUBUNIT METHYLTRANSFERASE H"/>
    <property type="match status" value="1"/>
</dbReference>
<dbReference type="Pfam" id="PF07931">
    <property type="entry name" value="CPT"/>
    <property type="match status" value="1"/>
</dbReference>
<dbReference type="Pfam" id="PF02590">
    <property type="entry name" value="SPOUT_MTase"/>
    <property type="match status" value="1"/>
</dbReference>
<dbReference type="PIRSF" id="PIRSF004505">
    <property type="entry name" value="MT_bac"/>
    <property type="match status" value="1"/>
</dbReference>
<dbReference type="SUPFAM" id="SSF75217">
    <property type="entry name" value="alpha/beta knot"/>
    <property type="match status" value="1"/>
</dbReference>